<dbReference type="EMBL" id="AC145273">
    <property type="status" value="NOT_ANNOTATED_CDS"/>
    <property type="molecule type" value="Genomic_DNA"/>
</dbReference>
<dbReference type="EMBL" id="AP008211">
    <property type="protein sequence ID" value="BAF16992.1"/>
    <property type="molecule type" value="Genomic_DNA"/>
</dbReference>
<dbReference type="EMBL" id="AP014961">
    <property type="protein sequence ID" value="BAS93118.1"/>
    <property type="molecule type" value="Genomic_DNA"/>
</dbReference>
<dbReference type="EMBL" id="CM000142">
    <property type="protein sequence ID" value="EEE63075.1"/>
    <property type="molecule type" value="Genomic_DNA"/>
</dbReference>
<dbReference type="RefSeq" id="XP_015638203.1">
    <property type="nucleotide sequence ID" value="XM_015782717.1"/>
</dbReference>
<dbReference type="SMR" id="P0C1Y4"/>
<dbReference type="FunCoup" id="P0C1Y4">
    <property type="interactions" value="11"/>
</dbReference>
<dbReference type="STRING" id="39947.P0C1Y4"/>
<dbReference type="PaxDb" id="39947-P0C1Y4"/>
<dbReference type="EnsemblPlants" id="Os05t0277000-00">
    <property type="protein sequence ID" value="Os05t0277000-00"/>
    <property type="gene ID" value="Os05g0277000"/>
</dbReference>
<dbReference type="Gramene" id="Os05t0277000-00">
    <property type="protein sequence ID" value="Os05t0277000-00"/>
    <property type="gene ID" value="Os05g0277000"/>
</dbReference>
<dbReference type="KEGG" id="dosa:Os05g0277000"/>
<dbReference type="eggNOG" id="ENOG502QPUJ">
    <property type="taxonomic scope" value="Eukaryota"/>
</dbReference>
<dbReference type="HOGENOM" id="CLU_027462_0_1_1"/>
<dbReference type="InParanoid" id="P0C1Y4"/>
<dbReference type="OMA" id="WFPAHAT"/>
<dbReference type="OrthoDB" id="5823761at2759"/>
<dbReference type="Proteomes" id="UP000000763">
    <property type="component" value="Chromosome 5"/>
</dbReference>
<dbReference type="Proteomes" id="UP000007752">
    <property type="component" value="Chromosome 5"/>
</dbReference>
<dbReference type="Proteomes" id="UP000059680">
    <property type="component" value="Chromosome 5"/>
</dbReference>
<dbReference type="GO" id="GO:0005576">
    <property type="term" value="C:extracellular region"/>
    <property type="evidence" value="ECO:0007669"/>
    <property type="project" value="UniProtKB-KW"/>
</dbReference>
<dbReference type="GO" id="GO:0016020">
    <property type="term" value="C:membrane"/>
    <property type="evidence" value="ECO:0007669"/>
    <property type="project" value="UniProtKB-SubCell"/>
</dbReference>
<dbReference type="GO" id="GO:0009828">
    <property type="term" value="P:plant-type cell wall loosening"/>
    <property type="evidence" value="ECO:0000250"/>
    <property type="project" value="UniProtKB"/>
</dbReference>
<dbReference type="CDD" id="cd22274">
    <property type="entry name" value="DPBB_EXPA_N"/>
    <property type="match status" value="1"/>
</dbReference>
<dbReference type="FunFam" id="2.60.40.760:FF:000001">
    <property type="entry name" value="Expansin"/>
    <property type="match status" value="1"/>
</dbReference>
<dbReference type="Gene3D" id="2.60.40.760">
    <property type="entry name" value="Expansin, cellulose-binding-like domain"/>
    <property type="match status" value="1"/>
</dbReference>
<dbReference type="Gene3D" id="2.40.40.10">
    <property type="entry name" value="RlpA-like domain"/>
    <property type="match status" value="1"/>
</dbReference>
<dbReference type="InterPro" id="IPR007118">
    <property type="entry name" value="Expan_Lol_pI"/>
</dbReference>
<dbReference type="InterPro" id="IPR002963">
    <property type="entry name" value="Expansin"/>
</dbReference>
<dbReference type="InterPro" id="IPR007112">
    <property type="entry name" value="Expansin/allergen_DPBB_dom"/>
</dbReference>
<dbReference type="InterPro" id="IPR007117">
    <property type="entry name" value="Expansin_CBD"/>
</dbReference>
<dbReference type="InterPro" id="IPR036749">
    <property type="entry name" value="Expansin_CBD_sf"/>
</dbReference>
<dbReference type="InterPro" id="IPR009009">
    <property type="entry name" value="RlpA-like_DPBB"/>
</dbReference>
<dbReference type="InterPro" id="IPR036908">
    <property type="entry name" value="RlpA-like_sf"/>
</dbReference>
<dbReference type="PANTHER" id="PTHR31867">
    <property type="entry name" value="EXPANSIN-A15"/>
    <property type="match status" value="1"/>
</dbReference>
<dbReference type="Pfam" id="PF03330">
    <property type="entry name" value="DPBB_1"/>
    <property type="match status" value="1"/>
</dbReference>
<dbReference type="Pfam" id="PF01357">
    <property type="entry name" value="Expansin_C"/>
    <property type="match status" value="1"/>
</dbReference>
<dbReference type="PRINTS" id="PR01226">
    <property type="entry name" value="EXPANSIN"/>
</dbReference>
<dbReference type="PRINTS" id="PR01225">
    <property type="entry name" value="EXPANSNFAMLY"/>
</dbReference>
<dbReference type="SMART" id="SM00837">
    <property type="entry name" value="DPBB_1"/>
    <property type="match status" value="1"/>
</dbReference>
<dbReference type="SUPFAM" id="SSF50685">
    <property type="entry name" value="Barwin-like endoglucanases"/>
    <property type="match status" value="1"/>
</dbReference>
<dbReference type="SUPFAM" id="SSF49590">
    <property type="entry name" value="PHL pollen allergen"/>
    <property type="match status" value="1"/>
</dbReference>
<dbReference type="PROSITE" id="PS50843">
    <property type="entry name" value="EXPANSIN_CBD"/>
    <property type="match status" value="1"/>
</dbReference>
<dbReference type="PROSITE" id="PS50842">
    <property type="entry name" value="EXPANSIN_EG45"/>
    <property type="match status" value="1"/>
</dbReference>
<keyword id="KW-0134">Cell wall</keyword>
<keyword id="KW-0961">Cell wall biogenesis/degradation</keyword>
<keyword id="KW-0472">Membrane</keyword>
<keyword id="KW-1185">Reference proteome</keyword>
<keyword id="KW-0964">Secreted</keyword>
<keyword id="KW-0732">Signal</keyword>
<gene>
    <name type="primary">EXPA33</name>
    <name type="synonym">EXP33</name>
    <name type="ordered locus">Os05g0277000</name>
    <name type="ordered locus">LOC_Os05g19600</name>
    <name evidence="6" type="ORF">OsJ_17883</name>
</gene>
<protein>
    <recommendedName>
        <fullName>Expansin-A33</fullName>
    </recommendedName>
    <alternativeName>
        <fullName>Alpha-expansin-33</fullName>
    </alternativeName>
    <alternativeName>
        <fullName>OsEXP33</fullName>
    </alternativeName>
    <alternativeName>
        <fullName>OsEXPA33</fullName>
    </alternativeName>
</protein>
<comment type="function">
    <text evidence="1">May cause loosening and extension of plant cell walls by disrupting non-covalent bonding between cellulose microfibrils and matrix glucans. No enzymatic activity has been found. May be required for rapid internodal elongation in deepwater rice during submergence (By similarity).</text>
</comment>
<comment type="subcellular location">
    <subcellularLocation>
        <location evidence="1">Secreted</location>
        <location evidence="1">Cell wall</location>
    </subcellularLocation>
    <subcellularLocation>
        <location evidence="1">Membrane</location>
        <topology evidence="1">Peripheral membrane protein</topology>
    </subcellularLocation>
</comment>
<comment type="similarity">
    <text evidence="5">Belongs to the expansin family. Expansin A subfamily.</text>
</comment>
<comment type="online information" name="EXPANSIN homepage">
    <link uri="https://www.dept.psu.edu/biology/groups/expansins/index.htm"/>
</comment>
<sequence>MAMPVVQVLLLCALAYQAVDAQWTPATATFYGGSDGAGTMGGACGYGNLYNAGYGLNNAALSSALFNDGAMCGACYTIACDTSQSTWCKPGTSITITATNLCPPNYAKKSDAGGWCNPPRKHFDMSQPAWTSIAIYQAGIVPVNFKRVPCQKSGGIRFTISGRDYFELVTVFNVGGSGVVAQVSIKGSKTDWMAMSRNWGQNWQSNAYLNTQSLSFKVKLDDAREVTVWNIAPSNWNFGTTYTSNINF</sequence>
<proteinExistence type="inferred from homology"/>
<organism>
    <name type="scientific">Oryza sativa subsp. japonica</name>
    <name type="common">Rice</name>
    <dbReference type="NCBI Taxonomy" id="39947"/>
    <lineage>
        <taxon>Eukaryota</taxon>
        <taxon>Viridiplantae</taxon>
        <taxon>Streptophyta</taxon>
        <taxon>Embryophyta</taxon>
        <taxon>Tracheophyta</taxon>
        <taxon>Spermatophyta</taxon>
        <taxon>Magnoliopsida</taxon>
        <taxon>Liliopsida</taxon>
        <taxon>Poales</taxon>
        <taxon>Poaceae</taxon>
        <taxon>BOP clade</taxon>
        <taxon>Oryzoideae</taxon>
        <taxon>Oryzeae</taxon>
        <taxon>Oryzinae</taxon>
        <taxon>Oryza</taxon>
        <taxon>Oryza sativa</taxon>
    </lineage>
</organism>
<reference key="1">
    <citation type="journal article" date="2005" name="Mol. Genet. Genomics">
        <title>A fine physical map of the rice chromosome 5.</title>
        <authorList>
            <person name="Cheng C.-H."/>
            <person name="Chung M.C."/>
            <person name="Liu S.-M."/>
            <person name="Chen S.-K."/>
            <person name="Kao F.Y."/>
            <person name="Lin S.-J."/>
            <person name="Hsiao S.-H."/>
            <person name="Tseng I.C."/>
            <person name="Hsing Y.-I.C."/>
            <person name="Wu H.-P."/>
            <person name="Chen C.-S."/>
            <person name="Shaw J.-F."/>
            <person name="Wu J."/>
            <person name="Matsumoto T."/>
            <person name="Sasaki T."/>
            <person name="Chen H.-C."/>
            <person name="Chow T.-Y."/>
        </authorList>
    </citation>
    <scope>NUCLEOTIDE SEQUENCE [LARGE SCALE GENOMIC DNA]</scope>
    <source>
        <strain>cv. Nipponbare</strain>
    </source>
</reference>
<reference key="2">
    <citation type="journal article" date="2005" name="Nature">
        <title>The map-based sequence of the rice genome.</title>
        <authorList>
            <consortium name="International rice genome sequencing project (IRGSP)"/>
        </authorList>
    </citation>
    <scope>NUCLEOTIDE SEQUENCE [LARGE SCALE GENOMIC DNA]</scope>
    <source>
        <strain>cv. Nipponbare</strain>
    </source>
</reference>
<reference key="3">
    <citation type="journal article" date="2008" name="Nucleic Acids Res.">
        <title>The rice annotation project database (RAP-DB): 2008 update.</title>
        <authorList>
            <consortium name="The rice annotation project (RAP)"/>
        </authorList>
    </citation>
    <scope>GENOME REANNOTATION</scope>
    <source>
        <strain>cv. Nipponbare</strain>
    </source>
</reference>
<reference key="4">
    <citation type="journal article" date="2013" name="Rice">
        <title>Improvement of the Oryza sativa Nipponbare reference genome using next generation sequence and optical map data.</title>
        <authorList>
            <person name="Kawahara Y."/>
            <person name="de la Bastide M."/>
            <person name="Hamilton J.P."/>
            <person name="Kanamori H."/>
            <person name="McCombie W.R."/>
            <person name="Ouyang S."/>
            <person name="Schwartz D.C."/>
            <person name="Tanaka T."/>
            <person name="Wu J."/>
            <person name="Zhou S."/>
            <person name="Childs K.L."/>
            <person name="Davidson R.M."/>
            <person name="Lin H."/>
            <person name="Quesada-Ocampo L."/>
            <person name="Vaillancourt B."/>
            <person name="Sakai H."/>
            <person name="Lee S.S."/>
            <person name="Kim J."/>
            <person name="Numa H."/>
            <person name="Itoh T."/>
            <person name="Buell C.R."/>
            <person name="Matsumoto T."/>
        </authorList>
    </citation>
    <scope>GENOME REANNOTATION</scope>
    <source>
        <strain>cv. Nipponbare</strain>
    </source>
</reference>
<reference key="5">
    <citation type="journal article" date="2005" name="PLoS Biol.">
        <title>The genomes of Oryza sativa: a history of duplications.</title>
        <authorList>
            <person name="Yu J."/>
            <person name="Wang J."/>
            <person name="Lin W."/>
            <person name="Li S."/>
            <person name="Li H."/>
            <person name="Zhou J."/>
            <person name="Ni P."/>
            <person name="Dong W."/>
            <person name="Hu S."/>
            <person name="Zeng C."/>
            <person name="Zhang J."/>
            <person name="Zhang Y."/>
            <person name="Li R."/>
            <person name="Xu Z."/>
            <person name="Li S."/>
            <person name="Li X."/>
            <person name="Zheng H."/>
            <person name="Cong L."/>
            <person name="Lin L."/>
            <person name="Yin J."/>
            <person name="Geng J."/>
            <person name="Li G."/>
            <person name="Shi J."/>
            <person name="Liu J."/>
            <person name="Lv H."/>
            <person name="Li J."/>
            <person name="Wang J."/>
            <person name="Deng Y."/>
            <person name="Ran L."/>
            <person name="Shi X."/>
            <person name="Wang X."/>
            <person name="Wu Q."/>
            <person name="Li C."/>
            <person name="Ren X."/>
            <person name="Wang J."/>
            <person name="Wang X."/>
            <person name="Li D."/>
            <person name="Liu D."/>
            <person name="Zhang X."/>
            <person name="Ji Z."/>
            <person name="Zhao W."/>
            <person name="Sun Y."/>
            <person name="Zhang Z."/>
            <person name="Bao J."/>
            <person name="Han Y."/>
            <person name="Dong L."/>
            <person name="Ji J."/>
            <person name="Chen P."/>
            <person name="Wu S."/>
            <person name="Liu J."/>
            <person name="Xiao Y."/>
            <person name="Bu D."/>
            <person name="Tan J."/>
            <person name="Yang L."/>
            <person name="Ye C."/>
            <person name="Zhang J."/>
            <person name="Xu J."/>
            <person name="Zhou Y."/>
            <person name="Yu Y."/>
            <person name="Zhang B."/>
            <person name="Zhuang S."/>
            <person name="Wei H."/>
            <person name="Liu B."/>
            <person name="Lei M."/>
            <person name="Yu H."/>
            <person name="Li Y."/>
            <person name="Xu H."/>
            <person name="Wei S."/>
            <person name="He X."/>
            <person name="Fang L."/>
            <person name="Zhang Z."/>
            <person name="Zhang Y."/>
            <person name="Huang X."/>
            <person name="Su Z."/>
            <person name="Tong W."/>
            <person name="Li J."/>
            <person name="Tong Z."/>
            <person name="Li S."/>
            <person name="Ye J."/>
            <person name="Wang L."/>
            <person name="Fang L."/>
            <person name="Lei T."/>
            <person name="Chen C.-S."/>
            <person name="Chen H.-C."/>
            <person name="Xu Z."/>
            <person name="Li H."/>
            <person name="Huang H."/>
            <person name="Zhang F."/>
            <person name="Xu H."/>
            <person name="Li N."/>
            <person name="Zhao C."/>
            <person name="Li S."/>
            <person name="Dong L."/>
            <person name="Huang Y."/>
            <person name="Li L."/>
            <person name="Xi Y."/>
            <person name="Qi Q."/>
            <person name="Li W."/>
            <person name="Zhang B."/>
            <person name="Hu W."/>
            <person name="Zhang Y."/>
            <person name="Tian X."/>
            <person name="Jiao Y."/>
            <person name="Liang X."/>
            <person name="Jin J."/>
            <person name="Gao L."/>
            <person name="Zheng W."/>
            <person name="Hao B."/>
            <person name="Liu S.-M."/>
            <person name="Wang W."/>
            <person name="Yuan L."/>
            <person name="Cao M."/>
            <person name="McDermott J."/>
            <person name="Samudrala R."/>
            <person name="Wang J."/>
            <person name="Wong G.K.-S."/>
            <person name="Yang H."/>
        </authorList>
    </citation>
    <scope>NUCLEOTIDE SEQUENCE [LARGE SCALE GENOMIC DNA]</scope>
    <source>
        <strain>cv. Nipponbare</strain>
    </source>
</reference>
<reference key="6">
    <citation type="journal article" date="2004" name="Plant Mol. Biol.">
        <title>Nomenclature for members of the expansin superfamily of genes and proteins.</title>
        <authorList>
            <person name="Kende H."/>
            <person name="Bradford K.J."/>
            <person name="Brummell D.A."/>
            <person name="Cho H.-T."/>
            <person name="Cosgrove D.J."/>
            <person name="Fleming A.J."/>
            <person name="Gehring C."/>
            <person name="Lee Y."/>
            <person name="McQueen-Mason S.J."/>
            <person name="Rose J.K.C."/>
            <person name="Voesenek L.A.C."/>
        </authorList>
    </citation>
    <scope>NOMENCLATURE</scope>
</reference>
<name>EXP33_ORYSJ</name>
<accession>P0C1Y4</accession>
<accession>Q0DJI1</accession>
<feature type="signal peptide" evidence="2">
    <location>
        <begin position="1"/>
        <end position="21"/>
    </location>
</feature>
<feature type="chain" id="PRO_0000252012" description="Expansin-A33">
    <location>
        <begin position="22"/>
        <end position="248"/>
    </location>
</feature>
<feature type="domain" description="Expansin-like EG45" evidence="4">
    <location>
        <begin position="41"/>
        <end position="155"/>
    </location>
</feature>
<feature type="domain" description="Expansin-like CBD" evidence="3">
    <location>
        <begin position="165"/>
        <end position="244"/>
    </location>
</feature>
<evidence type="ECO:0000250" key="1"/>
<evidence type="ECO:0000255" key="2"/>
<evidence type="ECO:0000255" key="3">
    <source>
        <dbReference type="PROSITE-ProRule" id="PRU00078"/>
    </source>
</evidence>
<evidence type="ECO:0000255" key="4">
    <source>
        <dbReference type="PROSITE-ProRule" id="PRU00079"/>
    </source>
</evidence>
<evidence type="ECO:0000305" key="5"/>
<evidence type="ECO:0000312" key="6">
    <source>
        <dbReference type="EMBL" id="EEE63075.1"/>
    </source>
</evidence>